<protein>
    <recommendedName>
        <fullName evidence="1">Small ribosomal subunit protein uS10</fullName>
    </recommendedName>
    <alternativeName>
        <fullName evidence="2">30S ribosomal protein S10</fullName>
    </alternativeName>
</protein>
<gene>
    <name evidence="1" type="primary">rpsJ</name>
    <name type="ordered locus">NT01CX_1114</name>
</gene>
<comment type="function">
    <text evidence="1">Involved in the binding of tRNA to the ribosomes.</text>
</comment>
<comment type="subunit">
    <text evidence="1">Part of the 30S ribosomal subunit.</text>
</comment>
<comment type="similarity">
    <text evidence="1">Belongs to the universal ribosomal protein uS10 family.</text>
</comment>
<feature type="chain" id="PRO_1000015014" description="Small ribosomal subunit protein uS10">
    <location>
        <begin position="1"/>
        <end position="102"/>
    </location>
</feature>
<proteinExistence type="inferred from homology"/>
<sequence length="102" mass="11481">MANQKIRIRLKAFDHNILDQSAEKIVETAKNTGAKVAGPVPLPTEKDVVTILRATHKYKDSREQFEIRTHKRLIDILSPSPKTVDALMRLDLPAGVDIEIKL</sequence>
<organism>
    <name type="scientific">Clostridium novyi (strain NT)</name>
    <dbReference type="NCBI Taxonomy" id="386415"/>
    <lineage>
        <taxon>Bacteria</taxon>
        <taxon>Bacillati</taxon>
        <taxon>Bacillota</taxon>
        <taxon>Clostridia</taxon>
        <taxon>Eubacteriales</taxon>
        <taxon>Clostridiaceae</taxon>
        <taxon>Clostridium</taxon>
    </lineage>
</organism>
<accession>A0PXU5</accession>
<dbReference type="EMBL" id="CP000382">
    <property type="protein sequence ID" value="ABK60689.1"/>
    <property type="molecule type" value="Genomic_DNA"/>
</dbReference>
<dbReference type="RefSeq" id="WP_003367878.1">
    <property type="nucleotide sequence ID" value="NC_008593.1"/>
</dbReference>
<dbReference type="SMR" id="A0PXU5"/>
<dbReference type="STRING" id="386415.NT01CX_1114"/>
<dbReference type="KEGG" id="cno:NT01CX_1114"/>
<dbReference type="eggNOG" id="COG0051">
    <property type="taxonomic scope" value="Bacteria"/>
</dbReference>
<dbReference type="HOGENOM" id="CLU_122625_1_3_9"/>
<dbReference type="Proteomes" id="UP000008220">
    <property type="component" value="Chromosome"/>
</dbReference>
<dbReference type="GO" id="GO:1990904">
    <property type="term" value="C:ribonucleoprotein complex"/>
    <property type="evidence" value="ECO:0007669"/>
    <property type="project" value="UniProtKB-KW"/>
</dbReference>
<dbReference type="GO" id="GO:0005840">
    <property type="term" value="C:ribosome"/>
    <property type="evidence" value="ECO:0007669"/>
    <property type="project" value="UniProtKB-KW"/>
</dbReference>
<dbReference type="GO" id="GO:0003735">
    <property type="term" value="F:structural constituent of ribosome"/>
    <property type="evidence" value="ECO:0007669"/>
    <property type="project" value="InterPro"/>
</dbReference>
<dbReference type="GO" id="GO:0000049">
    <property type="term" value="F:tRNA binding"/>
    <property type="evidence" value="ECO:0007669"/>
    <property type="project" value="UniProtKB-UniRule"/>
</dbReference>
<dbReference type="GO" id="GO:0006412">
    <property type="term" value="P:translation"/>
    <property type="evidence" value="ECO:0007669"/>
    <property type="project" value="UniProtKB-UniRule"/>
</dbReference>
<dbReference type="FunFam" id="3.30.70.600:FF:000001">
    <property type="entry name" value="30S ribosomal protein S10"/>
    <property type="match status" value="1"/>
</dbReference>
<dbReference type="Gene3D" id="3.30.70.600">
    <property type="entry name" value="Ribosomal protein S10 domain"/>
    <property type="match status" value="1"/>
</dbReference>
<dbReference type="HAMAP" id="MF_00508">
    <property type="entry name" value="Ribosomal_uS10"/>
    <property type="match status" value="1"/>
</dbReference>
<dbReference type="InterPro" id="IPR001848">
    <property type="entry name" value="Ribosomal_uS10"/>
</dbReference>
<dbReference type="InterPro" id="IPR018268">
    <property type="entry name" value="Ribosomal_uS10_CS"/>
</dbReference>
<dbReference type="InterPro" id="IPR027486">
    <property type="entry name" value="Ribosomal_uS10_dom"/>
</dbReference>
<dbReference type="InterPro" id="IPR036838">
    <property type="entry name" value="Ribosomal_uS10_dom_sf"/>
</dbReference>
<dbReference type="NCBIfam" id="NF001861">
    <property type="entry name" value="PRK00596.1"/>
    <property type="match status" value="1"/>
</dbReference>
<dbReference type="NCBIfam" id="TIGR01049">
    <property type="entry name" value="rpsJ_bact"/>
    <property type="match status" value="1"/>
</dbReference>
<dbReference type="PANTHER" id="PTHR11700">
    <property type="entry name" value="30S RIBOSOMAL PROTEIN S10 FAMILY MEMBER"/>
    <property type="match status" value="1"/>
</dbReference>
<dbReference type="Pfam" id="PF00338">
    <property type="entry name" value="Ribosomal_S10"/>
    <property type="match status" value="1"/>
</dbReference>
<dbReference type="PRINTS" id="PR00971">
    <property type="entry name" value="RIBOSOMALS10"/>
</dbReference>
<dbReference type="SMART" id="SM01403">
    <property type="entry name" value="Ribosomal_S10"/>
    <property type="match status" value="1"/>
</dbReference>
<dbReference type="SUPFAM" id="SSF54999">
    <property type="entry name" value="Ribosomal protein S10"/>
    <property type="match status" value="1"/>
</dbReference>
<dbReference type="PROSITE" id="PS00361">
    <property type="entry name" value="RIBOSOMAL_S10"/>
    <property type="match status" value="1"/>
</dbReference>
<evidence type="ECO:0000255" key="1">
    <source>
        <dbReference type="HAMAP-Rule" id="MF_00508"/>
    </source>
</evidence>
<evidence type="ECO:0000305" key="2"/>
<keyword id="KW-1185">Reference proteome</keyword>
<keyword id="KW-0687">Ribonucleoprotein</keyword>
<keyword id="KW-0689">Ribosomal protein</keyword>
<reference key="1">
    <citation type="journal article" date="2006" name="Nat. Biotechnol.">
        <title>The genome and transcriptomes of the anti-tumor agent Clostridium novyi-NT.</title>
        <authorList>
            <person name="Bettegowda C."/>
            <person name="Huang X."/>
            <person name="Lin J."/>
            <person name="Cheong I."/>
            <person name="Kohli M."/>
            <person name="Szabo S.A."/>
            <person name="Zhang X."/>
            <person name="Diaz L.A. Jr."/>
            <person name="Velculescu V.E."/>
            <person name="Parmigiani G."/>
            <person name="Kinzler K.W."/>
            <person name="Vogelstein B."/>
            <person name="Zhou S."/>
        </authorList>
    </citation>
    <scope>NUCLEOTIDE SEQUENCE [LARGE SCALE GENOMIC DNA]</scope>
    <source>
        <strain>NT</strain>
    </source>
</reference>
<name>RS10_CLONN</name>